<comment type="function">
    <text evidence="1">Cell wall formation.</text>
</comment>
<comment type="catalytic activity">
    <reaction evidence="1">
        <text>UDP-N-acetyl-alpha-D-muramate + NADP(+) = UDP-N-acetyl-3-O-(1-carboxyvinyl)-alpha-D-glucosamine + NADPH + H(+)</text>
        <dbReference type="Rhea" id="RHEA:12248"/>
        <dbReference type="ChEBI" id="CHEBI:15378"/>
        <dbReference type="ChEBI" id="CHEBI:57783"/>
        <dbReference type="ChEBI" id="CHEBI:58349"/>
        <dbReference type="ChEBI" id="CHEBI:68483"/>
        <dbReference type="ChEBI" id="CHEBI:70757"/>
        <dbReference type="EC" id="1.3.1.98"/>
    </reaction>
</comment>
<comment type="cofactor">
    <cofactor evidence="1">
        <name>FAD</name>
        <dbReference type="ChEBI" id="CHEBI:57692"/>
    </cofactor>
</comment>
<comment type="pathway">
    <text evidence="1">Cell wall biogenesis; peptidoglycan biosynthesis.</text>
</comment>
<comment type="subcellular location">
    <subcellularLocation>
        <location evidence="1">Cytoplasm</location>
    </subcellularLocation>
</comment>
<comment type="similarity">
    <text evidence="1">Belongs to the MurB family.</text>
</comment>
<proteinExistence type="inferred from homology"/>
<evidence type="ECO:0000255" key="1">
    <source>
        <dbReference type="HAMAP-Rule" id="MF_00037"/>
    </source>
</evidence>
<organism>
    <name type="scientific">Beijerinckia indica subsp. indica (strain ATCC 9039 / DSM 1715 / NCIMB 8712)</name>
    <dbReference type="NCBI Taxonomy" id="395963"/>
    <lineage>
        <taxon>Bacteria</taxon>
        <taxon>Pseudomonadati</taxon>
        <taxon>Pseudomonadota</taxon>
        <taxon>Alphaproteobacteria</taxon>
        <taxon>Hyphomicrobiales</taxon>
        <taxon>Beijerinckiaceae</taxon>
        <taxon>Beijerinckia</taxon>
    </lineage>
</organism>
<keyword id="KW-0131">Cell cycle</keyword>
<keyword id="KW-0132">Cell division</keyword>
<keyword id="KW-0133">Cell shape</keyword>
<keyword id="KW-0961">Cell wall biogenesis/degradation</keyword>
<keyword id="KW-0963">Cytoplasm</keyword>
<keyword id="KW-0274">FAD</keyword>
<keyword id="KW-0285">Flavoprotein</keyword>
<keyword id="KW-0521">NADP</keyword>
<keyword id="KW-0560">Oxidoreductase</keyword>
<keyword id="KW-0573">Peptidoglycan synthesis</keyword>
<keyword id="KW-1185">Reference proteome</keyword>
<dbReference type="EC" id="1.3.1.98" evidence="1"/>
<dbReference type="EMBL" id="CP001016">
    <property type="protein sequence ID" value="ACB94344.1"/>
    <property type="molecule type" value="Genomic_DNA"/>
</dbReference>
<dbReference type="RefSeq" id="WP_012383702.1">
    <property type="nucleotide sequence ID" value="NC_010581.1"/>
</dbReference>
<dbReference type="SMR" id="B2IGG2"/>
<dbReference type="STRING" id="395963.Bind_0694"/>
<dbReference type="KEGG" id="bid:Bind_0694"/>
<dbReference type="eggNOG" id="COG0812">
    <property type="taxonomic scope" value="Bacteria"/>
</dbReference>
<dbReference type="HOGENOM" id="CLU_035304_1_0_5"/>
<dbReference type="OrthoDB" id="9804753at2"/>
<dbReference type="UniPathway" id="UPA00219"/>
<dbReference type="Proteomes" id="UP000001695">
    <property type="component" value="Chromosome"/>
</dbReference>
<dbReference type="GO" id="GO:0005829">
    <property type="term" value="C:cytosol"/>
    <property type="evidence" value="ECO:0007669"/>
    <property type="project" value="TreeGrafter"/>
</dbReference>
<dbReference type="GO" id="GO:0071949">
    <property type="term" value="F:FAD binding"/>
    <property type="evidence" value="ECO:0007669"/>
    <property type="project" value="InterPro"/>
</dbReference>
<dbReference type="GO" id="GO:0008762">
    <property type="term" value="F:UDP-N-acetylmuramate dehydrogenase activity"/>
    <property type="evidence" value="ECO:0007669"/>
    <property type="project" value="UniProtKB-UniRule"/>
</dbReference>
<dbReference type="GO" id="GO:0051301">
    <property type="term" value="P:cell division"/>
    <property type="evidence" value="ECO:0007669"/>
    <property type="project" value="UniProtKB-KW"/>
</dbReference>
<dbReference type="GO" id="GO:0071555">
    <property type="term" value="P:cell wall organization"/>
    <property type="evidence" value="ECO:0007669"/>
    <property type="project" value="UniProtKB-KW"/>
</dbReference>
<dbReference type="GO" id="GO:0009252">
    <property type="term" value="P:peptidoglycan biosynthetic process"/>
    <property type="evidence" value="ECO:0007669"/>
    <property type="project" value="UniProtKB-UniRule"/>
</dbReference>
<dbReference type="GO" id="GO:0008360">
    <property type="term" value="P:regulation of cell shape"/>
    <property type="evidence" value="ECO:0007669"/>
    <property type="project" value="UniProtKB-KW"/>
</dbReference>
<dbReference type="Gene3D" id="3.30.465.10">
    <property type="match status" value="1"/>
</dbReference>
<dbReference type="Gene3D" id="3.90.78.10">
    <property type="entry name" value="UDP-N-acetylenolpyruvoylglucosamine reductase, C-terminal domain"/>
    <property type="match status" value="1"/>
</dbReference>
<dbReference type="Gene3D" id="3.30.43.10">
    <property type="entry name" value="Uridine Diphospho-n-acetylenolpyruvylglucosamine Reductase, domain 2"/>
    <property type="match status" value="1"/>
</dbReference>
<dbReference type="HAMAP" id="MF_00037">
    <property type="entry name" value="MurB"/>
    <property type="match status" value="1"/>
</dbReference>
<dbReference type="InterPro" id="IPR016166">
    <property type="entry name" value="FAD-bd_PCMH"/>
</dbReference>
<dbReference type="InterPro" id="IPR036318">
    <property type="entry name" value="FAD-bd_PCMH-like_sf"/>
</dbReference>
<dbReference type="InterPro" id="IPR016167">
    <property type="entry name" value="FAD-bd_PCMH_sub1"/>
</dbReference>
<dbReference type="InterPro" id="IPR016169">
    <property type="entry name" value="FAD-bd_PCMH_sub2"/>
</dbReference>
<dbReference type="InterPro" id="IPR003170">
    <property type="entry name" value="MurB"/>
</dbReference>
<dbReference type="InterPro" id="IPR011601">
    <property type="entry name" value="MurB_C"/>
</dbReference>
<dbReference type="InterPro" id="IPR036635">
    <property type="entry name" value="MurB_C_sf"/>
</dbReference>
<dbReference type="InterPro" id="IPR006094">
    <property type="entry name" value="Oxid_FAD_bind_N"/>
</dbReference>
<dbReference type="NCBIfam" id="TIGR00179">
    <property type="entry name" value="murB"/>
    <property type="match status" value="1"/>
</dbReference>
<dbReference type="NCBIfam" id="NF010480">
    <property type="entry name" value="PRK13905.1"/>
    <property type="match status" value="1"/>
</dbReference>
<dbReference type="PANTHER" id="PTHR21071">
    <property type="entry name" value="UDP-N-ACETYLENOLPYRUVOYLGLUCOSAMINE REDUCTASE"/>
    <property type="match status" value="1"/>
</dbReference>
<dbReference type="PANTHER" id="PTHR21071:SF4">
    <property type="entry name" value="UDP-N-ACETYLENOLPYRUVOYLGLUCOSAMINE REDUCTASE"/>
    <property type="match status" value="1"/>
</dbReference>
<dbReference type="Pfam" id="PF01565">
    <property type="entry name" value="FAD_binding_4"/>
    <property type="match status" value="1"/>
</dbReference>
<dbReference type="Pfam" id="PF02873">
    <property type="entry name" value="MurB_C"/>
    <property type="match status" value="1"/>
</dbReference>
<dbReference type="SUPFAM" id="SSF56176">
    <property type="entry name" value="FAD-binding/transporter-associated domain-like"/>
    <property type="match status" value="1"/>
</dbReference>
<dbReference type="SUPFAM" id="SSF56194">
    <property type="entry name" value="Uridine diphospho-N-Acetylenolpyruvylglucosamine reductase, MurB, C-terminal domain"/>
    <property type="match status" value="1"/>
</dbReference>
<dbReference type="PROSITE" id="PS51387">
    <property type="entry name" value="FAD_PCMH"/>
    <property type="match status" value="1"/>
</dbReference>
<name>MURB_BEII9</name>
<reference key="1">
    <citation type="journal article" date="2010" name="J. Bacteriol.">
        <title>Complete genome sequence of Beijerinckia indica subsp. indica.</title>
        <authorList>
            <person name="Tamas I."/>
            <person name="Dedysh S.N."/>
            <person name="Liesack W."/>
            <person name="Stott M.B."/>
            <person name="Alam M."/>
            <person name="Murrell J.C."/>
            <person name="Dunfield P.F."/>
        </authorList>
    </citation>
    <scope>NUCLEOTIDE SEQUENCE [LARGE SCALE GENOMIC DNA]</scope>
    <source>
        <strain>ATCC 9039 / DSM 1715 / NCIMB 8712</strain>
    </source>
</reference>
<feature type="chain" id="PRO_1000191399" description="UDP-N-acetylenolpyruvoylglucosamine reductase">
    <location>
        <begin position="1"/>
        <end position="310"/>
    </location>
</feature>
<feature type="domain" description="FAD-binding PCMH-type" evidence="1">
    <location>
        <begin position="34"/>
        <end position="211"/>
    </location>
</feature>
<feature type="active site" evidence="1">
    <location>
        <position position="177"/>
    </location>
</feature>
<feature type="active site" description="Proton donor" evidence="1">
    <location>
        <position position="225"/>
    </location>
</feature>
<feature type="active site" evidence="1">
    <location>
        <position position="295"/>
    </location>
</feature>
<accession>B2IGG2</accession>
<sequence length="310" mass="33141">MFADLIPRLRDAMPELRGELQTNVPLAPWTWFKTGGPAQCVYVAPDVEDLAYFLGNLDPDISIFVLGLGSNILVRDGGIEGVVISFGPSFHKIVIEGDTISAGAAVADVKLASAAAMAGLGGFAFLRGIPGTIGGALRMNAGAFGGTIADILVSCEGLDRRGALHHFTPEEMGFSYRHCAVEGIIFTQGLFAGWPENPEKIREDMGKIAQERAKTQPVNTRTGGSTFKNPNGAKAWELIDRAGCRGLTLGDAQVSELHCNFLVNRGKASAADIENLGEMVRQKVLAETGVELEWEILRVGRPPVAHKTSR</sequence>
<protein>
    <recommendedName>
        <fullName evidence="1">UDP-N-acetylenolpyruvoylglucosamine reductase</fullName>
        <ecNumber evidence="1">1.3.1.98</ecNumber>
    </recommendedName>
    <alternativeName>
        <fullName evidence="1">UDP-N-acetylmuramate dehydrogenase</fullName>
    </alternativeName>
</protein>
<gene>
    <name evidence="1" type="primary">murB</name>
    <name type="ordered locus">Bind_0694</name>
</gene>